<comment type="function">
    <text evidence="7 8 9 10 11 13 14">Protease that can remove conjugated ubiquitin from target proteins and polyubiquitin chains (PubMed:12084015, PubMed:15314155, PubMed:17897950, PubMed:19874889, PubMed:20233726, PubMed:24724799, PubMed:28992046). Inhibits the degradation of target proteins by the proteasome (PubMed:12084015). Cleaves preferentially 'Lys-6' and 'Lys-63'-linked ubiquitin chains. Has lower activity with 'Lys-11' and 'Lys-33'-linked ubiquitin chains, and extremely low activity with 'Lys-27', 'Lys-29' and 'Lys-48'-linked ubiquitin chains (in vitro) (PubMed:24724799). Plays a role in the regulation of pathways leading to NF-kappa-B activation (PubMed:17897950, PubMed:19874889). Plays a role in the regulation of DNA repair after double-stranded DNA breaks (PubMed:15314155, PubMed:20233726). Acts as a chromatin regulator via its association with the Polycomb group (PcG) multiprotein PRC1-like complex; may act by deubiquitinating components of the PRC1-like complex (PubMed:20601937). Promotes cell proliferation by deubiquitinating phosphorylated E2F1 (PubMed:28992046).</text>
</comment>
<comment type="catalytic activity">
    <reaction evidence="6 13 14">
        <text>Thiol-dependent hydrolysis of ester, thioester, amide, peptide and isopeptide bonds formed by the C-terminal Gly of ubiquitin (a 76-residue protein attached to proteins as an intracellular targeting signal).</text>
        <dbReference type="EC" id="3.4.19.12"/>
    </reaction>
</comment>
<comment type="subunit">
    <text evidence="6 7 8 10 12 13 15">Monomer (PubMed:24724799). Associated component of the Polycomb group (PcG) multiprotein PRC1-like complex (PubMed:20601937). Interacts with RANBP9/RANBPM (PubMed:12084015). Interacts with BRCA2 (PubMed:15314155). Interacts with CHUK/IKKA (PubMed:17897950). Interacts with NFKBIA (PubMed:19874889). Interacts with SPRY3, RAE1, MYCBP2/PAM, and KCTD6 (PubMed:29293652).</text>
</comment>
<comment type="subunit">
    <text evidence="9">(Microbial infection) Interacts with papilloma virus protein 16E7 (PubMed:18408009).</text>
</comment>
<comment type="interaction">
    <interactant intactId="EBI-306876">
        <id>P51784</id>
    </interactant>
    <interactant intactId="EBI-2341576">
        <id>P35226</id>
        <label>BMI1</label>
    </interactant>
    <organismsDiffer>false</organismsDiffer>
    <experiments>7</experiments>
</comment>
<comment type="interaction">
    <interactant intactId="EBI-306876">
        <id>P51784</id>
    </interactant>
    <interactant intactId="EBI-712912">
        <id>Q9HC52</id>
        <label>CBX8</label>
    </interactant>
    <organismsDiffer>false</organismsDiffer>
    <experiments>5</experiments>
</comment>
<comment type="interaction">
    <interactant intactId="EBI-306876">
        <id>P51784</id>
    </interactant>
    <interactant intactId="EBI-3937367">
        <id>Q9NUI1</id>
        <label>DECR2</label>
    </interactant>
    <organismsDiffer>false</organismsDiffer>
    <experiments>3</experiments>
</comment>
<comment type="interaction">
    <interactant intactId="EBI-306876">
        <id>P51784</id>
    </interactant>
    <interactant intactId="EBI-1222653">
        <id>Q86YC2</id>
        <label>PALB2</label>
    </interactant>
    <organismsDiffer>false</organismsDiffer>
    <experiments>2</experiments>
</comment>
<comment type="interaction">
    <interactant intactId="EBI-306876">
        <id>P51784</id>
    </interactant>
    <interactant intactId="EBI-2129767">
        <id>P35227</id>
        <label>PCGF2</label>
    </interactant>
    <organismsDiffer>false</organismsDiffer>
    <experiments>5</experiments>
</comment>
<comment type="interaction">
    <interactant intactId="EBI-306876">
        <id>P51784</id>
    </interactant>
    <interactant intactId="EBI-752313">
        <id>Q06587</id>
        <label>RING1</label>
    </interactant>
    <organismsDiffer>false</organismsDiffer>
    <experiments>4</experiments>
</comment>
<comment type="interaction">
    <interactant intactId="EBI-306876">
        <id>P51784</id>
    </interactant>
    <interactant intactId="EBI-722416">
        <id>Q99496</id>
        <label>RNF2</label>
    </interactant>
    <organismsDiffer>false</organismsDiffer>
    <experiments>4</experiments>
</comment>
<comment type="interaction">
    <interactant intactId="EBI-306876">
        <id>P51784</id>
    </interactant>
    <interactant intactId="EBI-866453">
        <id>P03129</id>
        <label>E7</label>
    </interactant>
    <organismsDiffer>true</organismsDiffer>
    <experiments>6</experiments>
</comment>
<comment type="interaction">
    <interactant intactId="EBI-306876">
        <id>P51784</id>
    </interactant>
    <interactant intactId="EBI-8433218">
        <id>Q9DLK6</id>
        <label>NP</label>
    </interactant>
    <organismsDiffer>true</organismsDiffer>
    <experiments>3</experiments>
</comment>
<comment type="interaction">
    <interactant intactId="EBI-306876">
        <id>P51784</id>
    </interactant>
    <interactant intactId="EBI-8431752">
        <id>P15659</id>
        <label>PA</label>
    </interactant>
    <organismsDiffer>true</organismsDiffer>
    <experiments>2</experiments>
</comment>
<comment type="interaction">
    <interactant intactId="EBI-306876">
        <id>P51784</id>
    </interactant>
    <interactant intactId="EBI-6164389">
        <id>P04608</id>
        <label>tat</label>
    </interactant>
    <organismsDiffer>true</organismsDiffer>
    <experiments>3</experiments>
</comment>
<comment type="subcellular location">
    <subcellularLocation>
        <location evidence="6 7 11 14">Nucleus</location>
    </subcellularLocation>
    <subcellularLocation>
        <location evidence="7 14">Cytoplasm</location>
    </subcellularLocation>
    <subcellularLocation>
        <location evidence="11 12">Chromosome</location>
    </subcellularLocation>
    <text evidence="6 7 11 12">Predominantly nuclear (PubMed:12084015, PubMed:15314155). Associates with chromatin (PubMed:20233726, PubMed:20601937).</text>
</comment>
<comment type="similarity">
    <text evidence="16">Belongs to the peptidase C19 family.</text>
</comment>
<comment type="caution">
    <text evidence="16">It is uncertain whether Met-1 or Met-44 is the initiator.</text>
</comment>
<comment type="sequence caution" evidence="16">
    <conflict type="erroneous initiation">
        <sequence resource="EMBL-CDS" id="AAC50450"/>
    </conflict>
    <text>Truncated N-terminus.</text>
</comment>
<comment type="sequence caution" evidence="16">
    <conflict type="frameshift">
        <sequence resource="EMBL-CDS" id="AAC50450"/>
    </conflict>
</comment>
<comment type="sequence caution" evidence="16">
    <conflict type="erroneous initiation">
        <sequence resource="EMBL-CDS" id="BAC20463"/>
    </conflict>
</comment>
<feature type="chain" id="PRO_0000080632" description="Ubiquitin carboxyl-terminal hydrolase 11">
    <location>
        <begin position="1"/>
        <end position="963"/>
    </location>
</feature>
<feature type="domain" description="DUSP" evidence="2">
    <location>
        <begin position="76"/>
        <end position="184"/>
    </location>
</feature>
<feature type="domain" description="USP">
    <location>
        <begin position="309"/>
        <end position="930"/>
    </location>
</feature>
<feature type="region of interest" description="Disordered" evidence="5">
    <location>
        <begin position="64"/>
        <end position="93"/>
    </location>
</feature>
<feature type="region of interest" description="Disordered" evidence="5">
    <location>
        <begin position="644"/>
        <end position="691"/>
    </location>
</feature>
<feature type="region of interest" description="Disordered" evidence="5">
    <location>
        <begin position="716"/>
        <end position="735"/>
    </location>
</feature>
<feature type="region of interest" description="Disordered" evidence="5">
    <location>
        <begin position="938"/>
        <end position="963"/>
    </location>
</feature>
<feature type="compositionally biased region" description="Basic and acidic residues" evidence="5">
    <location>
        <begin position="65"/>
        <end position="75"/>
    </location>
</feature>
<feature type="compositionally biased region" description="Acidic residues" evidence="5">
    <location>
        <begin position="649"/>
        <end position="665"/>
    </location>
</feature>
<feature type="compositionally biased region" description="Polar residues" evidence="5">
    <location>
        <begin position="717"/>
        <end position="731"/>
    </location>
</feature>
<feature type="compositionally biased region" description="Low complexity" evidence="5">
    <location>
        <begin position="938"/>
        <end position="957"/>
    </location>
</feature>
<feature type="active site" description="Nucleophile" evidence="17 18">
    <location>
        <position position="318"/>
    </location>
</feature>
<feature type="active site" description="Proton acceptor" evidence="3 4">
    <location>
        <position position="888"/>
    </location>
</feature>
<feature type="modified residue" description="N6-acetyllysine" evidence="20">
    <location>
        <position position="245"/>
    </location>
</feature>
<feature type="modified residue" description="Phosphoserine" evidence="21 22">
    <location>
        <position position="648"/>
    </location>
</feature>
<feature type="modified residue" description="Phosphoserine" evidence="1">
    <location>
        <position position="733"/>
    </location>
</feature>
<feature type="modified residue" description="Phosphoserine" evidence="19 23">
    <location>
        <position position="948"/>
    </location>
</feature>
<feature type="mutagenesis site" description="Loss of deubiquitinase activity." evidence="7 14">
    <original>C</original>
    <variation>S</variation>
    <location>
        <position position="318"/>
    </location>
</feature>
<feature type="sequence conflict" description="In Ref. 3; BAC20463." evidence="16" ref="3">
    <original>A</original>
    <variation>AT</variation>
    <location>
        <position position="52"/>
    </location>
</feature>
<feature type="sequence conflict" description="In Ref. 4; AAC50450." evidence="16" ref="4">
    <original>V</original>
    <variation>M</variation>
    <location>
        <position position="58"/>
    </location>
</feature>
<feature type="sequence conflict" description="In Ref. 4; AAC50450." evidence="16" ref="4">
    <original>A</original>
    <variation>R</variation>
    <location>
        <position position="62"/>
    </location>
</feature>
<feature type="sequence conflict" description="In Ref. 4; AAC50450." evidence="16" ref="4">
    <original>WR</original>
    <variation>CG</variation>
    <location>
        <begin position="82"/>
        <end position="83"/>
    </location>
</feature>
<feature type="sequence conflict" description="In Ref. 3; BAC20463." evidence="16" ref="3">
    <original>A</original>
    <variation>R</variation>
    <location>
        <position position="160"/>
    </location>
</feature>
<feature type="sequence conflict" description="In Ref. 3; BAC20463 and 4; AAC50450." evidence="16" ref="3 4">
    <original>A</original>
    <variation>R</variation>
    <location>
        <position position="161"/>
    </location>
</feature>
<feature type="sequence conflict" description="In Ref. 2; AAH00350." evidence="16" ref="2">
    <original>P</original>
    <variation>L</variation>
    <location>
        <position position="489"/>
    </location>
</feature>
<feature type="helix" evidence="25">
    <location>
        <begin position="78"/>
        <end position="86"/>
    </location>
</feature>
<feature type="turn" evidence="25">
    <location>
        <begin position="88"/>
        <end position="90"/>
    </location>
</feature>
<feature type="strand" evidence="25">
    <location>
        <begin position="101"/>
        <end position="106"/>
    </location>
</feature>
<feature type="helix" evidence="25">
    <location>
        <begin position="107"/>
        <end position="117"/>
    </location>
</feature>
<feature type="turn" evidence="24">
    <location>
        <begin position="118"/>
        <end position="120"/>
    </location>
</feature>
<feature type="helix" evidence="25">
    <location>
        <begin position="134"/>
        <end position="136"/>
    </location>
</feature>
<feature type="turn" evidence="25">
    <location>
        <begin position="140"/>
        <end position="142"/>
    </location>
</feature>
<feature type="turn" evidence="25">
    <location>
        <begin position="151"/>
        <end position="153"/>
    </location>
</feature>
<feature type="strand" evidence="25">
    <location>
        <begin position="154"/>
        <end position="159"/>
    </location>
</feature>
<feature type="helix" evidence="25">
    <location>
        <begin position="160"/>
        <end position="170"/>
    </location>
</feature>
<feature type="strand" evidence="25">
    <location>
        <begin position="180"/>
        <end position="186"/>
    </location>
</feature>
<feature type="strand" evidence="25">
    <location>
        <begin position="189"/>
        <end position="192"/>
    </location>
</feature>
<feature type="strand" evidence="25">
    <location>
        <begin position="197"/>
        <end position="203"/>
    </location>
</feature>
<feature type="strand" evidence="25">
    <location>
        <begin position="206"/>
        <end position="215"/>
    </location>
</feature>
<feature type="helix" evidence="25">
    <location>
        <begin position="221"/>
        <end position="231"/>
    </location>
</feature>
<feature type="strand" evidence="25">
    <location>
        <begin position="240"/>
        <end position="245"/>
    </location>
</feature>
<feature type="strand" evidence="25">
    <location>
        <begin position="249"/>
        <end position="253"/>
    </location>
</feature>
<feature type="turn" evidence="25">
    <location>
        <begin position="261"/>
        <end position="265"/>
    </location>
</feature>
<feature type="strand" evidence="25">
    <location>
        <begin position="271"/>
        <end position="276"/>
    </location>
</feature>
<feature type="helix" evidence="25">
    <location>
        <begin position="284"/>
        <end position="287"/>
    </location>
</feature>
<feature type="strand" evidence="26">
    <location>
        <begin position="314"/>
        <end position="316"/>
    </location>
</feature>
<feature type="helix" evidence="26">
    <location>
        <begin position="318"/>
        <end position="328"/>
    </location>
</feature>
<feature type="helix" evidence="26">
    <location>
        <begin position="331"/>
        <end position="338"/>
    </location>
</feature>
<feature type="helix" evidence="26">
    <location>
        <begin position="341"/>
        <end position="345"/>
    </location>
</feature>
<feature type="helix" evidence="26">
    <location>
        <begin position="357"/>
        <end position="369"/>
    </location>
</feature>
<feature type="strand" evidence="26">
    <location>
        <begin position="375"/>
        <end position="377"/>
    </location>
</feature>
<feature type="helix" evidence="26">
    <location>
        <begin position="380"/>
        <end position="389"/>
    </location>
</feature>
<feature type="helix" evidence="26">
    <location>
        <begin position="391"/>
        <end position="393"/>
    </location>
</feature>
<feature type="strand" evidence="26">
    <location>
        <begin position="394"/>
        <end position="396"/>
    </location>
</feature>
<feature type="helix" evidence="26">
    <location>
        <begin position="401"/>
        <end position="415"/>
    </location>
</feature>
<feature type="helix" evidence="26">
    <location>
        <begin position="435"/>
        <end position="447"/>
    </location>
</feature>
<feature type="helix" evidence="26">
    <location>
        <begin position="453"/>
        <end position="458"/>
    </location>
</feature>
<feature type="strand" evidence="26">
    <location>
        <begin position="460"/>
        <end position="467"/>
    </location>
</feature>
<feature type="turn" evidence="26">
    <location>
        <begin position="469"/>
        <end position="471"/>
    </location>
</feature>
<feature type="strand" evidence="26">
    <location>
        <begin position="474"/>
        <end position="486"/>
    </location>
</feature>
<feature type="strand" evidence="26">
    <location>
        <begin position="778"/>
        <end position="780"/>
    </location>
</feature>
<feature type="helix" evidence="26">
    <location>
        <begin position="781"/>
        <end position="788"/>
    </location>
</feature>
<feature type="strand" evidence="26">
    <location>
        <begin position="791"/>
        <end position="793"/>
    </location>
</feature>
<feature type="strand" evidence="26">
    <location>
        <begin position="800"/>
        <end position="802"/>
    </location>
</feature>
<feature type="turn" evidence="26">
    <location>
        <begin position="803"/>
        <end position="806"/>
    </location>
</feature>
<feature type="strand" evidence="26">
    <location>
        <begin position="807"/>
        <end position="809"/>
    </location>
</feature>
<feature type="strand" evidence="26">
    <location>
        <begin position="812"/>
        <end position="819"/>
    </location>
</feature>
<feature type="strand" evidence="26">
    <location>
        <begin position="822"/>
        <end position="828"/>
    </location>
</feature>
<feature type="strand" evidence="26">
    <location>
        <begin position="831"/>
        <end position="833"/>
    </location>
</feature>
<feature type="strand" evidence="26">
    <location>
        <begin position="838"/>
        <end position="840"/>
    </location>
</feature>
<feature type="helix" evidence="26">
    <location>
        <begin position="855"/>
        <end position="858"/>
    </location>
</feature>
<feature type="helix" evidence="26">
    <location>
        <begin position="867"/>
        <end position="869"/>
    </location>
</feature>
<feature type="strand" evidence="26">
    <location>
        <begin position="870"/>
        <end position="882"/>
    </location>
</feature>
<feature type="strand" evidence="26">
    <location>
        <begin position="884"/>
        <end position="894"/>
    </location>
</feature>
<feature type="turn" evidence="26">
    <location>
        <begin position="896"/>
        <end position="898"/>
    </location>
</feature>
<feature type="strand" evidence="26">
    <location>
        <begin position="901"/>
        <end position="905"/>
    </location>
</feature>
<feature type="strand" evidence="26">
    <location>
        <begin position="908"/>
        <end position="912"/>
    </location>
</feature>
<feature type="helix" evidence="26">
    <location>
        <begin position="914"/>
        <end position="916"/>
    </location>
</feature>
<feature type="strand" evidence="26">
    <location>
        <begin position="922"/>
        <end position="929"/>
    </location>
</feature>
<feature type="helix" evidence="26">
    <location>
        <begin position="930"/>
        <end position="934"/>
    </location>
</feature>
<gene>
    <name type="primary">USP11</name>
    <name type="synonym">UHX1</name>
</gene>
<name>UBP11_HUMAN</name>
<proteinExistence type="evidence at protein level"/>
<keyword id="KW-0002">3D-structure</keyword>
<keyword id="KW-0007">Acetylation</keyword>
<keyword id="KW-0158">Chromosome</keyword>
<keyword id="KW-0963">Cytoplasm</keyword>
<keyword id="KW-0945">Host-virus interaction</keyword>
<keyword id="KW-0378">Hydrolase</keyword>
<keyword id="KW-0539">Nucleus</keyword>
<keyword id="KW-0597">Phosphoprotein</keyword>
<keyword id="KW-0645">Protease</keyword>
<keyword id="KW-1267">Proteomics identification</keyword>
<keyword id="KW-1185">Reference proteome</keyword>
<keyword id="KW-0788">Thiol protease</keyword>
<keyword id="KW-0833">Ubl conjugation pathway</keyword>
<protein>
    <recommendedName>
        <fullName>Ubiquitin carboxyl-terminal hydrolase 11</fullName>
        <ecNumber evidence="6 13 14">3.4.19.12</ecNumber>
    </recommendedName>
    <alternativeName>
        <fullName>Deubiquitinating enzyme 11</fullName>
    </alternativeName>
    <alternativeName>
        <fullName>Ubiquitin thioesterase 11</fullName>
    </alternativeName>
    <alternativeName>
        <fullName>Ubiquitin-specific-processing protease 11</fullName>
    </alternativeName>
</protein>
<dbReference type="EC" id="3.4.19.12" evidence="6 13 14"/>
<dbReference type="EMBL" id="AL096791">
    <property type="status" value="NOT_ANNOTATED_CDS"/>
    <property type="molecule type" value="Genomic_DNA"/>
</dbReference>
<dbReference type="EMBL" id="BC140849">
    <property type="protein sequence ID" value="AAI40850.1"/>
    <property type="molecule type" value="mRNA"/>
</dbReference>
<dbReference type="EMBL" id="BC000350">
    <property type="protein sequence ID" value="AAH00350.4"/>
    <property type="molecule type" value="mRNA"/>
</dbReference>
<dbReference type="EMBL" id="AB073597">
    <property type="protein sequence ID" value="BAC20463.1"/>
    <property type="status" value="ALT_INIT"/>
    <property type="molecule type" value="mRNA"/>
</dbReference>
<dbReference type="EMBL" id="U44839">
    <property type="protein sequence ID" value="AAC50450.1"/>
    <property type="status" value="ALT_SEQ"/>
    <property type="molecule type" value="mRNA"/>
</dbReference>
<dbReference type="RefSeq" id="NP_004642.2">
    <property type="nucleotide sequence ID" value="NM_004651.3"/>
</dbReference>
<dbReference type="RefSeq" id="XP_005272731.1">
    <property type="nucleotide sequence ID" value="XM_005272674.3"/>
</dbReference>
<dbReference type="RefSeq" id="XP_011542290.1">
    <property type="nucleotide sequence ID" value="XM_011543988.1"/>
</dbReference>
<dbReference type="PDB" id="4MEL">
    <property type="method" value="X-ray"/>
    <property type="resolution" value="2.90 A"/>
    <property type="chains" value="A/B=67-288"/>
</dbReference>
<dbReference type="PDB" id="5OK6">
    <property type="method" value="X-ray"/>
    <property type="resolution" value="1.30 A"/>
    <property type="chains" value="A/B=67-288"/>
</dbReference>
<dbReference type="PDB" id="8OYP">
    <property type="method" value="X-ray"/>
    <property type="resolution" value="2.44 A"/>
    <property type="chains" value="A/B=295-489, A/B=778-937"/>
</dbReference>
<dbReference type="PDBsum" id="4MEL"/>
<dbReference type="PDBsum" id="5OK6"/>
<dbReference type="PDBsum" id="8OYP"/>
<dbReference type="SMR" id="P51784"/>
<dbReference type="BioGRID" id="113866">
    <property type="interactions" value="555"/>
</dbReference>
<dbReference type="DIP" id="DIP-27567N"/>
<dbReference type="FunCoup" id="P51784">
    <property type="interactions" value="2548"/>
</dbReference>
<dbReference type="IntAct" id="P51784">
    <property type="interactions" value="147"/>
</dbReference>
<dbReference type="MINT" id="P51784"/>
<dbReference type="STRING" id="9606.ENSP00000218348"/>
<dbReference type="BindingDB" id="P51784"/>
<dbReference type="ChEMBL" id="CHEMBL4630820"/>
<dbReference type="MEROPS" id="C19.014"/>
<dbReference type="GlyGen" id="P51784">
    <property type="glycosylation" value="1 site, 1 O-linked glycan (1 site)"/>
</dbReference>
<dbReference type="iPTMnet" id="P51784"/>
<dbReference type="MetOSite" id="P51784"/>
<dbReference type="PhosphoSitePlus" id="P51784"/>
<dbReference type="BioMuta" id="USP11"/>
<dbReference type="DMDM" id="251757432"/>
<dbReference type="jPOST" id="P51784"/>
<dbReference type="MassIVE" id="P51784"/>
<dbReference type="PaxDb" id="9606-ENSP00000218348"/>
<dbReference type="PeptideAtlas" id="P51784"/>
<dbReference type="ProteomicsDB" id="56381"/>
<dbReference type="Pumba" id="P51784"/>
<dbReference type="Antibodypedia" id="25411">
    <property type="antibodies" value="311 antibodies from 36 providers"/>
</dbReference>
<dbReference type="DNASU" id="8237"/>
<dbReference type="Ensembl" id="ENST00000218348.7">
    <property type="protein sequence ID" value="ENSP00000218348.3"/>
    <property type="gene ID" value="ENSG00000102226.10"/>
</dbReference>
<dbReference type="UCSC" id="uc064yux.1">
    <property type="organism name" value="human"/>
</dbReference>
<dbReference type="AGR" id="HGNC:12609"/>
<dbReference type="DisGeNET" id="8237"/>
<dbReference type="GeneCards" id="USP11"/>
<dbReference type="HGNC" id="HGNC:12609">
    <property type="gene designation" value="USP11"/>
</dbReference>
<dbReference type="HPA" id="ENSG00000102226">
    <property type="expression patterns" value="Tissue enhanced (brain)"/>
</dbReference>
<dbReference type="MIM" id="300050">
    <property type="type" value="gene"/>
</dbReference>
<dbReference type="neXtProt" id="NX_P51784"/>
<dbReference type="OpenTargets" id="ENSG00000102226"/>
<dbReference type="PharmGKB" id="PA37235"/>
<dbReference type="VEuPathDB" id="HostDB:ENSG00000102226"/>
<dbReference type="eggNOG" id="KOG1870">
    <property type="taxonomic scope" value="Eukaryota"/>
</dbReference>
<dbReference type="GeneTree" id="ENSGT00940000160485"/>
<dbReference type="InParanoid" id="P51784"/>
<dbReference type="OrthoDB" id="265776at2759"/>
<dbReference type="PAN-GO" id="P51784">
    <property type="GO annotations" value="1 GO annotation based on evolutionary models"/>
</dbReference>
<dbReference type="PhylomeDB" id="P51784"/>
<dbReference type="TreeFam" id="TF106276"/>
<dbReference type="PathwayCommons" id="P51784"/>
<dbReference type="Reactome" id="R-HSA-390471">
    <property type="pathway name" value="Association of TriC/CCT with target proteins during biosynthesis"/>
</dbReference>
<dbReference type="Reactome" id="R-HSA-5689880">
    <property type="pathway name" value="Ub-specific processing proteases"/>
</dbReference>
<dbReference type="SignaLink" id="P51784"/>
<dbReference type="BioGRID-ORCS" id="8237">
    <property type="hits" value="8 hits in 829 CRISPR screens"/>
</dbReference>
<dbReference type="CD-CODE" id="DEE660B4">
    <property type="entry name" value="Stress granule"/>
</dbReference>
<dbReference type="ChiTaRS" id="USP11">
    <property type="organism name" value="human"/>
</dbReference>
<dbReference type="EvolutionaryTrace" id="P51784"/>
<dbReference type="GeneWiki" id="USP11"/>
<dbReference type="GenomeRNAi" id="8237"/>
<dbReference type="Pharos" id="P51784">
    <property type="development level" value="Tbio"/>
</dbReference>
<dbReference type="PRO" id="PR:P51784"/>
<dbReference type="Proteomes" id="UP000005640">
    <property type="component" value="Chromosome X"/>
</dbReference>
<dbReference type="RNAct" id="P51784">
    <property type="molecule type" value="protein"/>
</dbReference>
<dbReference type="Bgee" id="ENSG00000102226">
    <property type="expression patterns" value="Expressed in right frontal lobe and 206 other cell types or tissues"/>
</dbReference>
<dbReference type="ExpressionAtlas" id="P51784">
    <property type="expression patterns" value="baseline and differential"/>
</dbReference>
<dbReference type="GO" id="GO:0005694">
    <property type="term" value="C:chromosome"/>
    <property type="evidence" value="ECO:0007669"/>
    <property type="project" value="UniProtKB-SubCell"/>
</dbReference>
<dbReference type="GO" id="GO:0005829">
    <property type="term" value="C:cytosol"/>
    <property type="evidence" value="ECO:0000314"/>
    <property type="project" value="HPA"/>
</dbReference>
<dbReference type="GO" id="GO:0005654">
    <property type="term" value="C:nucleoplasm"/>
    <property type="evidence" value="ECO:0000314"/>
    <property type="project" value="HPA"/>
</dbReference>
<dbReference type="GO" id="GO:0005634">
    <property type="term" value="C:nucleus"/>
    <property type="evidence" value="ECO:0000314"/>
    <property type="project" value="UniProtKB"/>
</dbReference>
<dbReference type="GO" id="GO:0004843">
    <property type="term" value="F:cysteine-type deubiquitinase activity"/>
    <property type="evidence" value="ECO:0000314"/>
    <property type="project" value="UniProtKB"/>
</dbReference>
<dbReference type="GO" id="GO:0004197">
    <property type="term" value="F:cysteine-type endopeptidase activity"/>
    <property type="evidence" value="ECO:0000314"/>
    <property type="project" value="UniProtKB"/>
</dbReference>
<dbReference type="GO" id="GO:0001222">
    <property type="term" value="F:transcription corepressor binding"/>
    <property type="evidence" value="ECO:0000353"/>
    <property type="project" value="ARUK-UCL"/>
</dbReference>
<dbReference type="GO" id="GO:0016579">
    <property type="term" value="P:protein deubiquitination"/>
    <property type="evidence" value="ECO:0000314"/>
    <property type="project" value="UniProtKB"/>
</dbReference>
<dbReference type="GO" id="GO:0006508">
    <property type="term" value="P:proteolysis"/>
    <property type="evidence" value="ECO:0007669"/>
    <property type="project" value="UniProtKB-KW"/>
</dbReference>
<dbReference type="CDD" id="cd02674">
    <property type="entry name" value="Peptidase_C19R"/>
    <property type="match status" value="1"/>
</dbReference>
<dbReference type="FunFam" id="3.10.20.90:FF:000229">
    <property type="entry name" value="Ubiquitin carboxyl-terminal hydrolase 11"/>
    <property type="match status" value="1"/>
</dbReference>
<dbReference type="FunFam" id="3.30.2230.10:FF:000008">
    <property type="entry name" value="Ubiquitin carboxyl-terminal hydrolase 11"/>
    <property type="match status" value="1"/>
</dbReference>
<dbReference type="FunFam" id="3.90.70.10:FF:000013">
    <property type="entry name" value="ubiquitin carboxyl-terminal hydrolase 15 isoform X1"/>
    <property type="match status" value="1"/>
</dbReference>
<dbReference type="Gene3D" id="3.90.70.10">
    <property type="entry name" value="Cysteine proteinases"/>
    <property type="match status" value="2"/>
</dbReference>
<dbReference type="Gene3D" id="3.30.2230.10">
    <property type="entry name" value="DUSP-like"/>
    <property type="match status" value="1"/>
</dbReference>
<dbReference type="Gene3D" id="3.10.20.90">
    <property type="entry name" value="Phosphatidylinositol 3-kinase Catalytic Subunit, Chain A, domain 1"/>
    <property type="match status" value="1"/>
</dbReference>
<dbReference type="InterPro" id="IPR035927">
    <property type="entry name" value="DUSP-like_sf"/>
</dbReference>
<dbReference type="InterPro" id="IPR038765">
    <property type="entry name" value="Papain-like_cys_pep_sf"/>
</dbReference>
<dbReference type="InterPro" id="IPR006615">
    <property type="entry name" value="Pept_C19_DUSP"/>
</dbReference>
<dbReference type="InterPro" id="IPR001394">
    <property type="entry name" value="Peptidase_C19_UCH"/>
</dbReference>
<dbReference type="InterPro" id="IPR050185">
    <property type="entry name" value="Ub_carboxyl-term_hydrolase"/>
</dbReference>
<dbReference type="InterPro" id="IPR028135">
    <property type="entry name" value="Ub_USP-typ"/>
</dbReference>
<dbReference type="InterPro" id="IPR029346">
    <property type="entry name" value="USP_C"/>
</dbReference>
<dbReference type="InterPro" id="IPR018200">
    <property type="entry name" value="USP_CS"/>
</dbReference>
<dbReference type="InterPro" id="IPR028889">
    <property type="entry name" value="USP_dom"/>
</dbReference>
<dbReference type="PANTHER" id="PTHR21646">
    <property type="entry name" value="UBIQUITIN CARBOXYL-TERMINAL HYDROLASE"/>
    <property type="match status" value="1"/>
</dbReference>
<dbReference type="PANTHER" id="PTHR21646:SF29">
    <property type="entry name" value="UBIQUITIN CARBOXYL-TERMINAL HYDROLASE 11"/>
    <property type="match status" value="1"/>
</dbReference>
<dbReference type="Pfam" id="PF06337">
    <property type="entry name" value="DUSP"/>
    <property type="match status" value="1"/>
</dbReference>
<dbReference type="Pfam" id="PF14836">
    <property type="entry name" value="Ubiquitin_3"/>
    <property type="match status" value="1"/>
</dbReference>
<dbReference type="Pfam" id="PF00443">
    <property type="entry name" value="UCH"/>
    <property type="match status" value="1"/>
</dbReference>
<dbReference type="Pfam" id="PF14533">
    <property type="entry name" value="USP7_C2"/>
    <property type="match status" value="1"/>
</dbReference>
<dbReference type="SMART" id="SM00695">
    <property type="entry name" value="DUSP"/>
    <property type="match status" value="1"/>
</dbReference>
<dbReference type="SUPFAM" id="SSF54001">
    <property type="entry name" value="Cysteine proteinases"/>
    <property type="match status" value="1"/>
</dbReference>
<dbReference type="SUPFAM" id="SSF143791">
    <property type="entry name" value="DUSP-like"/>
    <property type="match status" value="1"/>
</dbReference>
<dbReference type="PROSITE" id="PS51283">
    <property type="entry name" value="DUSP"/>
    <property type="match status" value="1"/>
</dbReference>
<dbReference type="PROSITE" id="PS00972">
    <property type="entry name" value="USP_1"/>
    <property type="match status" value="1"/>
</dbReference>
<dbReference type="PROSITE" id="PS00973">
    <property type="entry name" value="USP_2"/>
    <property type="match status" value="1"/>
</dbReference>
<dbReference type="PROSITE" id="PS50235">
    <property type="entry name" value="USP_3"/>
    <property type="match status" value="1"/>
</dbReference>
<organism>
    <name type="scientific">Homo sapiens</name>
    <name type="common">Human</name>
    <dbReference type="NCBI Taxonomy" id="9606"/>
    <lineage>
        <taxon>Eukaryota</taxon>
        <taxon>Metazoa</taxon>
        <taxon>Chordata</taxon>
        <taxon>Craniata</taxon>
        <taxon>Vertebrata</taxon>
        <taxon>Euteleostomi</taxon>
        <taxon>Mammalia</taxon>
        <taxon>Eutheria</taxon>
        <taxon>Euarchontoglires</taxon>
        <taxon>Primates</taxon>
        <taxon>Haplorrhini</taxon>
        <taxon>Catarrhini</taxon>
        <taxon>Hominidae</taxon>
        <taxon>Homo</taxon>
    </lineage>
</organism>
<reference key="1">
    <citation type="journal article" date="2005" name="Nature">
        <title>The DNA sequence of the human X chromosome.</title>
        <authorList>
            <person name="Ross M.T."/>
            <person name="Grafham D.V."/>
            <person name="Coffey A.J."/>
            <person name="Scherer S."/>
            <person name="McLay K."/>
            <person name="Muzny D."/>
            <person name="Platzer M."/>
            <person name="Howell G.R."/>
            <person name="Burrows C."/>
            <person name="Bird C.P."/>
            <person name="Frankish A."/>
            <person name="Lovell F.L."/>
            <person name="Howe K.L."/>
            <person name="Ashurst J.L."/>
            <person name="Fulton R.S."/>
            <person name="Sudbrak R."/>
            <person name="Wen G."/>
            <person name="Jones M.C."/>
            <person name="Hurles M.E."/>
            <person name="Andrews T.D."/>
            <person name="Scott C.E."/>
            <person name="Searle S."/>
            <person name="Ramser J."/>
            <person name="Whittaker A."/>
            <person name="Deadman R."/>
            <person name="Carter N.P."/>
            <person name="Hunt S.E."/>
            <person name="Chen R."/>
            <person name="Cree A."/>
            <person name="Gunaratne P."/>
            <person name="Havlak P."/>
            <person name="Hodgson A."/>
            <person name="Metzker M.L."/>
            <person name="Richards S."/>
            <person name="Scott G."/>
            <person name="Steffen D."/>
            <person name="Sodergren E."/>
            <person name="Wheeler D.A."/>
            <person name="Worley K.C."/>
            <person name="Ainscough R."/>
            <person name="Ambrose K.D."/>
            <person name="Ansari-Lari M.A."/>
            <person name="Aradhya S."/>
            <person name="Ashwell R.I."/>
            <person name="Babbage A.K."/>
            <person name="Bagguley C.L."/>
            <person name="Ballabio A."/>
            <person name="Banerjee R."/>
            <person name="Barker G.E."/>
            <person name="Barlow K.F."/>
            <person name="Barrett I.P."/>
            <person name="Bates K.N."/>
            <person name="Beare D.M."/>
            <person name="Beasley H."/>
            <person name="Beasley O."/>
            <person name="Beck A."/>
            <person name="Bethel G."/>
            <person name="Blechschmidt K."/>
            <person name="Brady N."/>
            <person name="Bray-Allen S."/>
            <person name="Bridgeman A.M."/>
            <person name="Brown A.J."/>
            <person name="Brown M.J."/>
            <person name="Bonnin D."/>
            <person name="Bruford E.A."/>
            <person name="Buhay C."/>
            <person name="Burch P."/>
            <person name="Burford D."/>
            <person name="Burgess J."/>
            <person name="Burrill W."/>
            <person name="Burton J."/>
            <person name="Bye J.M."/>
            <person name="Carder C."/>
            <person name="Carrel L."/>
            <person name="Chako J."/>
            <person name="Chapman J.C."/>
            <person name="Chavez D."/>
            <person name="Chen E."/>
            <person name="Chen G."/>
            <person name="Chen Y."/>
            <person name="Chen Z."/>
            <person name="Chinault C."/>
            <person name="Ciccodicola A."/>
            <person name="Clark S.Y."/>
            <person name="Clarke G."/>
            <person name="Clee C.M."/>
            <person name="Clegg S."/>
            <person name="Clerc-Blankenburg K."/>
            <person name="Clifford K."/>
            <person name="Cobley V."/>
            <person name="Cole C.G."/>
            <person name="Conquer J.S."/>
            <person name="Corby N."/>
            <person name="Connor R.E."/>
            <person name="David R."/>
            <person name="Davies J."/>
            <person name="Davis C."/>
            <person name="Davis J."/>
            <person name="Delgado O."/>
            <person name="Deshazo D."/>
            <person name="Dhami P."/>
            <person name="Ding Y."/>
            <person name="Dinh H."/>
            <person name="Dodsworth S."/>
            <person name="Draper H."/>
            <person name="Dugan-Rocha S."/>
            <person name="Dunham A."/>
            <person name="Dunn M."/>
            <person name="Durbin K.J."/>
            <person name="Dutta I."/>
            <person name="Eades T."/>
            <person name="Ellwood M."/>
            <person name="Emery-Cohen A."/>
            <person name="Errington H."/>
            <person name="Evans K.L."/>
            <person name="Faulkner L."/>
            <person name="Francis F."/>
            <person name="Frankland J."/>
            <person name="Fraser A.E."/>
            <person name="Galgoczy P."/>
            <person name="Gilbert J."/>
            <person name="Gill R."/>
            <person name="Gloeckner G."/>
            <person name="Gregory S.G."/>
            <person name="Gribble S."/>
            <person name="Griffiths C."/>
            <person name="Grocock R."/>
            <person name="Gu Y."/>
            <person name="Gwilliam R."/>
            <person name="Hamilton C."/>
            <person name="Hart E.A."/>
            <person name="Hawes A."/>
            <person name="Heath P.D."/>
            <person name="Heitmann K."/>
            <person name="Hennig S."/>
            <person name="Hernandez J."/>
            <person name="Hinzmann B."/>
            <person name="Ho S."/>
            <person name="Hoffs M."/>
            <person name="Howden P.J."/>
            <person name="Huckle E.J."/>
            <person name="Hume J."/>
            <person name="Hunt P.J."/>
            <person name="Hunt A.R."/>
            <person name="Isherwood J."/>
            <person name="Jacob L."/>
            <person name="Johnson D."/>
            <person name="Jones S."/>
            <person name="de Jong P.J."/>
            <person name="Joseph S.S."/>
            <person name="Keenan S."/>
            <person name="Kelly S."/>
            <person name="Kershaw J.K."/>
            <person name="Khan Z."/>
            <person name="Kioschis P."/>
            <person name="Klages S."/>
            <person name="Knights A.J."/>
            <person name="Kosiura A."/>
            <person name="Kovar-Smith C."/>
            <person name="Laird G.K."/>
            <person name="Langford C."/>
            <person name="Lawlor S."/>
            <person name="Leversha M."/>
            <person name="Lewis L."/>
            <person name="Liu W."/>
            <person name="Lloyd C."/>
            <person name="Lloyd D.M."/>
            <person name="Loulseged H."/>
            <person name="Loveland J.E."/>
            <person name="Lovell J.D."/>
            <person name="Lozado R."/>
            <person name="Lu J."/>
            <person name="Lyne R."/>
            <person name="Ma J."/>
            <person name="Maheshwari M."/>
            <person name="Matthews L.H."/>
            <person name="McDowall J."/>
            <person name="McLaren S."/>
            <person name="McMurray A."/>
            <person name="Meidl P."/>
            <person name="Meitinger T."/>
            <person name="Milne S."/>
            <person name="Miner G."/>
            <person name="Mistry S.L."/>
            <person name="Morgan M."/>
            <person name="Morris S."/>
            <person name="Mueller I."/>
            <person name="Mullikin J.C."/>
            <person name="Nguyen N."/>
            <person name="Nordsiek G."/>
            <person name="Nyakatura G."/>
            <person name="O'dell C.N."/>
            <person name="Okwuonu G."/>
            <person name="Palmer S."/>
            <person name="Pandian R."/>
            <person name="Parker D."/>
            <person name="Parrish J."/>
            <person name="Pasternak S."/>
            <person name="Patel D."/>
            <person name="Pearce A.V."/>
            <person name="Pearson D.M."/>
            <person name="Pelan S.E."/>
            <person name="Perez L."/>
            <person name="Porter K.M."/>
            <person name="Ramsey Y."/>
            <person name="Reichwald K."/>
            <person name="Rhodes S."/>
            <person name="Ridler K.A."/>
            <person name="Schlessinger D."/>
            <person name="Schueler M.G."/>
            <person name="Sehra H.K."/>
            <person name="Shaw-Smith C."/>
            <person name="Shen H."/>
            <person name="Sheridan E.M."/>
            <person name="Shownkeen R."/>
            <person name="Skuce C.D."/>
            <person name="Smith M.L."/>
            <person name="Sotheran E.C."/>
            <person name="Steingruber H.E."/>
            <person name="Steward C.A."/>
            <person name="Storey R."/>
            <person name="Swann R.M."/>
            <person name="Swarbreck D."/>
            <person name="Tabor P.E."/>
            <person name="Taudien S."/>
            <person name="Taylor T."/>
            <person name="Teague B."/>
            <person name="Thomas K."/>
            <person name="Thorpe A."/>
            <person name="Timms K."/>
            <person name="Tracey A."/>
            <person name="Trevanion S."/>
            <person name="Tromans A.C."/>
            <person name="d'Urso M."/>
            <person name="Verduzco D."/>
            <person name="Villasana D."/>
            <person name="Waldron L."/>
            <person name="Wall M."/>
            <person name="Wang Q."/>
            <person name="Warren J."/>
            <person name="Warry G.L."/>
            <person name="Wei X."/>
            <person name="West A."/>
            <person name="Whitehead S.L."/>
            <person name="Whiteley M.N."/>
            <person name="Wilkinson J.E."/>
            <person name="Willey D.L."/>
            <person name="Williams G."/>
            <person name="Williams L."/>
            <person name="Williamson A."/>
            <person name="Williamson H."/>
            <person name="Wilming L."/>
            <person name="Woodmansey R.L."/>
            <person name="Wray P.W."/>
            <person name="Yen J."/>
            <person name="Zhang J."/>
            <person name="Zhou J."/>
            <person name="Zoghbi H."/>
            <person name="Zorilla S."/>
            <person name="Buck D."/>
            <person name="Reinhardt R."/>
            <person name="Poustka A."/>
            <person name="Rosenthal A."/>
            <person name="Lehrach H."/>
            <person name="Meindl A."/>
            <person name="Minx P.J."/>
            <person name="Hillier L.W."/>
            <person name="Willard H.F."/>
            <person name="Wilson R.K."/>
            <person name="Waterston R.H."/>
            <person name="Rice C.M."/>
            <person name="Vaudin M."/>
            <person name="Coulson A."/>
            <person name="Nelson D.L."/>
            <person name="Weinstock G."/>
            <person name="Sulston J.E."/>
            <person name="Durbin R.M."/>
            <person name="Hubbard T."/>
            <person name="Gibbs R.A."/>
            <person name="Beck S."/>
            <person name="Rogers J."/>
            <person name="Bentley D.R."/>
        </authorList>
    </citation>
    <scope>NUCLEOTIDE SEQUENCE [LARGE SCALE GENOMIC DNA]</scope>
</reference>
<reference key="2">
    <citation type="journal article" date="2004" name="Genome Res.">
        <title>The status, quality, and expansion of the NIH full-length cDNA project: the Mammalian Gene Collection (MGC).</title>
        <authorList>
            <consortium name="The MGC Project Team"/>
        </authorList>
    </citation>
    <scope>NUCLEOTIDE SEQUENCE [LARGE SCALE MRNA]</scope>
    <source>
        <tissue>Muscle</tissue>
    </source>
</reference>
<reference key="3">
    <citation type="journal article" date="2002" name="Biochem. J.">
        <title>Structural and functional characterization of the USP11 deubiquitinating enzyme, which interacts with the RanGTP-associated protein RanBPM.</title>
        <authorList>
            <person name="Ideguchi H."/>
            <person name="Ueda A."/>
            <person name="Tanaka M."/>
            <person name="Yang J."/>
            <person name="Tsuji T."/>
            <person name="Ohno S."/>
            <person name="Hagiwara E."/>
            <person name="Aoki A."/>
            <person name="Ishigatsubo Y."/>
        </authorList>
    </citation>
    <scope>NUCLEOTIDE SEQUENCE [MRNA] OF 41-963</scope>
    <scope>CATALYTIC ACTIVITY</scope>
    <scope>SUBCELLULAR LOCATION</scope>
    <scope>INTERACTION WITH RANBP9</scope>
    <source>
        <tissue>Fetal brain</tissue>
    </source>
</reference>
<reference key="4">
    <citation type="journal article" date="1996" name="Hum. Mol. Genet.">
        <title>A ubiquitin C-terminal hydrolase gene on the proximal short arm of the X chromosome: implications for X-linked retinal disorders.</title>
        <authorList>
            <person name="Swanson D.A."/>
            <person name="Freund C.L."/>
            <person name="Ploder L."/>
            <person name="McInnes R.R."/>
            <person name="Valle D."/>
        </authorList>
    </citation>
    <scope>NUCLEOTIDE SEQUENCE [MRNA] OF 52-963</scope>
    <source>
        <tissue>Retina</tissue>
    </source>
</reference>
<reference key="5">
    <citation type="journal article" date="2004" name="Mol. Cell. Biol.">
        <title>BRCA2 is ubiquitinated in vivo and interacts with USP11, a deubiquitinating enzyme that exhibits prosurvival function in the cellular response to DNA damage.</title>
        <authorList>
            <person name="Schoenfeld A.R."/>
            <person name="Apgar S."/>
            <person name="Dolios G."/>
            <person name="Wang R."/>
            <person name="Aaronson S.A."/>
        </authorList>
    </citation>
    <scope>FUNCTION</scope>
    <scope>INTERACTION WITH BRCA2</scope>
    <scope>SUBCELLULAR LOCATION</scope>
    <scope>MUTAGENESIS OF CYS-318</scope>
    <scope>ACTIVE SITE</scope>
    <scope>IDENTIFICATION BY MASS SPECTROMETRY</scope>
</reference>
<reference key="6">
    <citation type="journal article" date="2007" name="J. Biol. Chem.">
        <title>The deubiquitinating enzyme USP11 controls an IkappaB kinase alpha (IKKalpha)-p53 signaling pathway in response to tumor necrosis factor alpha (TNFalpha).</title>
        <authorList>
            <person name="Yamaguchi T."/>
            <person name="Kimura J."/>
            <person name="Miki Y."/>
            <person name="Yoshida K."/>
        </authorList>
    </citation>
    <scope>FUNCTION</scope>
    <scope>INTERACTION WITH CHUK</scope>
</reference>
<reference key="7">
    <citation type="journal article" date="2008" name="J. Biol. Chem.">
        <title>USP11 stabilizes HPV-16E7 and further modulates the E7 biological activity.</title>
        <authorList>
            <person name="Lin C.H."/>
            <person name="Chang H.S."/>
            <person name="Yu W.C."/>
        </authorList>
    </citation>
    <scope>FUNCTION</scope>
    <scope>INTERACTION WITH HUMAN PAPILLOMA VIRUS 16E7 (MICROBIAL INFECTION)</scope>
</reference>
<reference key="8">
    <citation type="journal article" date="2008" name="Proc. Natl. Acad. Sci. U.S.A.">
        <title>A quantitative atlas of mitotic phosphorylation.</title>
        <authorList>
            <person name="Dephoure N."/>
            <person name="Zhou C."/>
            <person name="Villen J."/>
            <person name="Beausoleil S.A."/>
            <person name="Bakalarski C.E."/>
            <person name="Elledge S.J."/>
            <person name="Gygi S.P."/>
        </authorList>
    </citation>
    <scope>PHOSPHORYLATION [LARGE SCALE ANALYSIS] AT SER-948</scope>
    <scope>IDENTIFICATION BY MASS SPECTROMETRY [LARGE SCALE ANALYSIS]</scope>
    <source>
        <tissue>Cervix carcinoma</tissue>
    </source>
</reference>
<reference key="9">
    <citation type="journal article" date="2009" name="Sci. Signal.">
        <title>Quantitative phosphoproteomic analysis of T cell receptor signaling reveals system-wide modulation of protein-protein interactions.</title>
        <authorList>
            <person name="Mayya V."/>
            <person name="Lundgren D.H."/>
            <person name="Hwang S.-I."/>
            <person name="Rezaul K."/>
            <person name="Wu L."/>
            <person name="Eng J.K."/>
            <person name="Rodionov V."/>
            <person name="Han D.K."/>
        </authorList>
    </citation>
    <scope>IDENTIFICATION BY MASS SPECTROMETRY [LARGE SCALE ANALYSIS]</scope>
    <source>
        <tissue>Leukemic T-cell</tissue>
    </source>
</reference>
<reference key="10">
    <citation type="journal article" date="2009" name="Science">
        <title>Lysine acetylation targets protein complexes and co-regulates major cellular functions.</title>
        <authorList>
            <person name="Choudhary C."/>
            <person name="Kumar C."/>
            <person name="Gnad F."/>
            <person name="Nielsen M.L."/>
            <person name="Rehman M."/>
            <person name="Walther T.C."/>
            <person name="Olsen J.V."/>
            <person name="Mann M."/>
        </authorList>
    </citation>
    <scope>ACETYLATION [LARGE SCALE ANALYSIS] AT LYS-245</scope>
    <scope>IDENTIFICATION BY MASS SPECTROMETRY [LARGE SCALE ANALYSIS]</scope>
</reference>
<reference key="11">
    <citation type="journal article" date="2010" name="Cell. Signal.">
        <title>USP11 negatively regulates TNFalpha-induced NF-kappaB activation by targeting on IkappaBalpha.</title>
        <authorList>
            <person name="Sun W."/>
            <person name="Tan X."/>
            <person name="Shi Y."/>
            <person name="Xu G."/>
            <person name="Mao R."/>
            <person name="Gu X."/>
            <person name="Fan Y."/>
            <person name="Yu Y."/>
            <person name="Burlingame S."/>
            <person name="Zhang H."/>
            <person name="Rednam S.P."/>
            <person name="Lu X."/>
            <person name="Zhang T."/>
            <person name="Fu S."/>
            <person name="Cao G."/>
            <person name="Qin J."/>
            <person name="Yang J."/>
        </authorList>
    </citation>
    <scope>FUNCTION</scope>
    <scope>INTERACTION WITH NFKBIA</scope>
    <scope>IDENTIFICATION BY MASS SPECTROMETRY</scope>
</reference>
<reference key="12">
    <citation type="journal article" date="2010" name="EMBO J.">
        <title>Ubiquitin-specific proteases 7 and 11 modulate Polycomb regulation of the INK4a tumour suppressor.</title>
        <authorList>
            <person name="Maertens G.N."/>
            <person name="El Messaoudi-Aubert S."/>
            <person name="Elderkin S."/>
            <person name="Hiom K."/>
            <person name="Peters G."/>
        </authorList>
    </citation>
    <scope>FUNCTION</scope>
    <scope>SUBCELLULAR LOCATION</scope>
    <scope>INTERACTION WITH THE PRC1-LIKE COMPLEX</scope>
</reference>
<reference key="13">
    <citation type="journal article" date="2010" name="J. Biol. Chem.">
        <title>Sensitivity to poly(ADP-ribose) polymerase (PARP) inhibition identifies ubiquitin-specific peptidase 11 (USP11) as a regulator of DNA double-strand break repair.</title>
        <authorList>
            <person name="Wiltshire T.D."/>
            <person name="Lovejoy C.A."/>
            <person name="Wang T."/>
            <person name="Xia F."/>
            <person name="O'Connor M.J."/>
            <person name="Cortez D."/>
        </authorList>
    </citation>
    <scope>FUNCTION</scope>
    <scope>SUBCELLULAR LOCATION</scope>
</reference>
<reference key="14">
    <citation type="journal article" date="2010" name="Sci. Signal.">
        <title>Quantitative phosphoproteomics reveals widespread full phosphorylation site occupancy during mitosis.</title>
        <authorList>
            <person name="Olsen J.V."/>
            <person name="Vermeulen M."/>
            <person name="Santamaria A."/>
            <person name="Kumar C."/>
            <person name="Miller M.L."/>
            <person name="Jensen L.J."/>
            <person name="Gnad F."/>
            <person name="Cox J."/>
            <person name="Jensen T.S."/>
            <person name="Nigg E.A."/>
            <person name="Brunak S."/>
            <person name="Mann M."/>
        </authorList>
    </citation>
    <scope>PHOSPHORYLATION [LARGE SCALE ANALYSIS] AT SER-648</scope>
    <scope>IDENTIFICATION BY MASS SPECTROMETRY [LARGE SCALE ANALYSIS]</scope>
    <source>
        <tissue>Cervix carcinoma</tissue>
    </source>
</reference>
<reference key="15">
    <citation type="journal article" date="2011" name="BMC Syst. Biol.">
        <title>Initial characterization of the human central proteome.</title>
        <authorList>
            <person name="Burkard T.R."/>
            <person name="Planyavsky M."/>
            <person name="Kaupe I."/>
            <person name="Breitwieser F.P."/>
            <person name="Buerckstuemmer T."/>
            <person name="Bennett K.L."/>
            <person name="Superti-Furga G."/>
            <person name="Colinge J."/>
        </authorList>
    </citation>
    <scope>IDENTIFICATION BY MASS SPECTROMETRY [LARGE SCALE ANALYSIS]</scope>
</reference>
<reference key="16">
    <citation type="journal article" date="2011" name="Sci. Signal.">
        <title>System-wide temporal characterization of the proteome and phosphoproteome of human embryonic stem cell differentiation.</title>
        <authorList>
            <person name="Rigbolt K.T."/>
            <person name="Prokhorova T.A."/>
            <person name="Akimov V."/>
            <person name="Henningsen J."/>
            <person name="Johansen P.T."/>
            <person name="Kratchmarova I."/>
            <person name="Kassem M."/>
            <person name="Mann M."/>
            <person name="Olsen J.V."/>
            <person name="Blagoev B."/>
        </authorList>
    </citation>
    <scope>PHOSPHORYLATION [LARGE SCALE ANALYSIS] AT SER-648</scope>
    <scope>IDENTIFICATION BY MASS SPECTROMETRY [LARGE SCALE ANALYSIS]</scope>
</reference>
<reference key="17">
    <citation type="journal article" date="2013" name="J. Proteome Res.">
        <title>Toward a comprehensive characterization of a human cancer cell phosphoproteome.</title>
        <authorList>
            <person name="Zhou H."/>
            <person name="Di Palma S."/>
            <person name="Preisinger C."/>
            <person name="Peng M."/>
            <person name="Polat A.N."/>
            <person name="Heck A.J."/>
            <person name="Mohammed S."/>
        </authorList>
    </citation>
    <scope>IDENTIFICATION BY MASS SPECTROMETRY [LARGE SCALE ANALYSIS]</scope>
    <source>
        <tissue>Cervix carcinoma</tissue>
        <tissue>Erythroleukemia</tissue>
    </source>
</reference>
<reference key="18">
    <citation type="journal article" date="2014" name="J. Proteomics">
        <title>An enzyme assisted RP-RPLC approach for in-depth analysis of human liver phosphoproteome.</title>
        <authorList>
            <person name="Bian Y."/>
            <person name="Song C."/>
            <person name="Cheng K."/>
            <person name="Dong M."/>
            <person name="Wang F."/>
            <person name="Huang J."/>
            <person name="Sun D."/>
            <person name="Wang L."/>
            <person name="Ye M."/>
            <person name="Zou H."/>
        </authorList>
    </citation>
    <scope>PHOSPHORYLATION [LARGE SCALE ANALYSIS] AT SER-948</scope>
    <scope>IDENTIFICATION BY MASS SPECTROMETRY [LARGE SCALE ANALYSIS]</scope>
    <source>
        <tissue>Liver</tissue>
    </source>
</reference>
<reference key="19">
    <citation type="journal article" date="2018" name="J. Mol. Cell Biol.">
        <title>Phosphorylated E2F1 is stabilized by nuclear USP11 to drive Peg10 gene expression and activate lung epithelial cells.</title>
        <authorList>
            <person name="Wang D."/>
            <person name="Zhao J."/>
            <person name="Li S."/>
            <person name="Wei J."/>
            <person name="Nan L."/>
            <person name="Mallampalli R.K."/>
            <person name="Weathington N.M."/>
            <person name="Ma H."/>
            <person name="Zhao Y."/>
        </authorList>
    </citation>
    <scope>FUNCTION</scope>
    <scope>CATALYTIC ACTIVITY</scope>
    <scope>SUBCELLULAR LOCATION</scope>
    <scope>MUTAGENESIS OF CYS-318</scope>
    <scope>ACTIVE SITE</scope>
</reference>
<reference key="20">
    <citation type="journal article" date="2018" name="PLoS ONE">
        <title>USP11 deubiquitinates RAE1 and plays a key role in bipolar spindle formation.</title>
        <authorList>
            <person name="Stockum A."/>
            <person name="Snijders A.P."/>
            <person name="Maertens G.N."/>
        </authorList>
    </citation>
    <scope>INTERACTION WITH SPRY3; RAE1; MYCBP2 AND KCTD6</scope>
</reference>
<reference key="21">
    <citation type="journal article" date="2014" name="Biochemistry">
        <title>Structure and catalytic regulatory function of ubiquitin specific protease 11 N-terminal and ubiquitin-like domains.</title>
        <authorList>
            <person name="Harper S."/>
            <person name="Gratton H.E."/>
            <person name="Cornaciu I."/>
            <person name="Oberer M."/>
            <person name="Scott D.J."/>
            <person name="Emsley J."/>
            <person name="Dreveny I."/>
        </authorList>
    </citation>
    <scope>X-RAY CRYSTALLOGRAPHY (2.90 ANGSTROMS) OF 67-288</scope>
    <scope>FUNCTION</scope>
    <scope>CATALYTIC ACTIVITY</scope>
    <scope>SUBUNIT</scope>
</reference>
<accession>P51784</accession>
<accession>B2RTX1</accession>
<accession>Q8IUG6</accession>
<accession>Q9BWE1</accession>
<evidence type="ECO:0000250" key="1">
    <source>
        <dbReference type="UniProtKB" id="Q5D006"/>
    </source>
</evidence>
<evidence type="ECO:0000255" key="2">
    <source>
        <dbReference type="PROSITE-ProRule" id="PRU00613"/>
    </source>
</evidence>
<evidence type="ECO:0000255" key="3">
    <source>
        <dbReference type="PROSITE-ProRule" id="PRU10092"/>
    </source>
</evidence>
<evidence type="ECO:0000255" key="4">
    <source>
        <dbReference type="PROSITE-ProRule" id="PRU10093"/>
    </source>
</evidence>
<evidence type="ECO:0000256" key="5">
    <source>
        <dbReference type="SAM" id="MobiDB-lite"/>
    </source>
</evidence>
<evidence type="ECO:0000269" key="6">
    <source>
    </source>
</evidence>
<evidence type="ECO:0000269" key="7">
    <source>
    </source>
</evidence>
<evidence type="ECO:0000269" key="8">
    <source>
    </source>
</evidence>
<evidence type="ECO:0000269" key="9">
    <source>
    </source>
</evidence>
<evidence type="ECO:0000269" key="10">
    <source>
    </source>
</evidence>
<evidence type="ECO:0000269" key="11">
    <source>
    </source>
</evidence>
<evidence type="ECO:0000269" key="12">
    <source>
    </source>
</evidence>
<evidence type="ECO:0000269" key="13">
    <source>
    </source>
</evidence>
<evidence type="ECO:0000269" key="14">
    <source>
    </source>
</evidence>
<evidence type="ECO:0000269" key="15">
    <source>
    </source>
</evidence>
<evidence type="ECO:0000305" key="16"/>
<evidence type="ECO:0000305" key="17">
    <source>
    </source>
</evidence>
<evidence type="ECO:0000305" key="18">
    <source>
    </source>
</evidence>
<evidence type="ECO:0007744" key="19">
    <source>
    </source>
</evidence>
<evidence type="ECO:0007744" key="20">
    <source>
    </source>
</evidence>
<evidence type="ECO:0007744" key="21">
    <source>
    </source>
</evidence>
<evidence type="ECO:0007744" key="22">
    <source>
    </source>
</evidence>
<evidence type="ECO:0007744" key="23">
    <source>
    </source>
</evidence>
<evidence type="ECO:0007829" key="24">
    <source>
        <dbReference type="PDB" id="4MEL"/>
    </source>
</evidence>
<evidence type="ECO:0007829" key="25">
    <source>
        <dbReference type="PDB" id="5OK6"/>
    </source>
</evidence>
<evidence type="ECO:0007829" key="26">
    <source>
        <dbReference type="PDB" id="8OYP"/>
    </source>
</evidence>
<sequence length="963" mass="109817">MAVAPRLFGGLCFRFRDQNPEVAVEGRLPISHSCVGCRRERTAMATVAANPAAAAAAVAAAAAVTEDREPQHEELPGLDSQWRQIENGESGRERPLRAGESWFLVEKHWYKQWEAYVQGGDQDSSTFPGCINNATLFQDEINWRLKEGLVEGEDYVLLPAAAWHYLVSWYGLEHGQPPIERKVIELPNIQKVEVYPVELLLVRHNDLGKSHTVQFSHTDSIGLVLRTARERFLVEPQEDTRLWAKNSEGSLDRLYDTHITVLDAALETGQLIIMETRKKDGTWPSAQLHVMNNNMSEEDEDFKGQPGICGLTNLGNTCFMNSALQCLSNVPQLTEYFLNNCYLEELNFRNPLGMKGEIAEAYADLVKQAWSGHHRSIVPHVFKNKVGHFASQFLGYQQHDSQELLSFLLDGLHEDLNRVKKKEYVELCDAAGRPDQEVAQEAWQNHKRRNDSVIVDTFHGLFKSTLVCPDCGNVSVTFDPFCYLSVPLPISHKRVLEVFFIPMDPRRKPEQHRLVVPKKGKISDLCVALSKHTGISPERMMVADVFSHRFYKLYQLEEPLSSILDRDDIFVYEVSGRIEAIEGSREDIVVPVYLRERTPARDYNNSYYGLMLFGHPLLVSVPRDRFTWEGLYNVLMYRLSRYVTKPNSDDEDDGDEKEDDEEDKDDVPGPSTGGSLRDPEPEQAGPSSGVTNRCPFLLDNCLGTSQWPPRRRRKQLFTLQTVNSNGTSDRTTSPEEVHAQPYIAIDWEPEMKKRYYDEVEAEGYVKHDCVGYVMKKAPVRLQECIELFTTVETLEKENPWYCPSCKQHQLATKKLDLWMLPEILIIHLKRFSYTKFSREKLDTLVEFPIRDLDFSEFVIQPQNESNPELYKYDLIAVSNHYGGMRDGHYTTFACNKDSGQWHYFDDNSVSPVNENQIESKAAYVLFYQRQDVARRLLSPAGSSGAPASPACSSPPSSEFMDVN</sequence>